<reference key="1">
    <citation type="journal article" date="2007" name="Science">
        <title>The Fusarium graminearum genome reveals a link between localized polymorphism and pathogen specialization.</title>
        <authorList>
            <person name="Cuomo C.A."/>
            <person name="Gueldener U."/>
            <person name="Xu J.-R."/>
            <person name="Trail F."/>
            <person name="Turgeon B.G."/>
            <person name="Di Pietro A."/>
            <person name="Walton J.D."/>
            <person name="Ma L.-J."/>
            <person name="Baker S.E."/>
            <person name="Rep M."/>
            <person name="Adam G."/>
            <person name="Antoniw J."/>
            <person name="Baldwin T."/>
            <person name="Calvo S.E."/>
            <person name="Chang Y.-L."/>
            <person name="DeCaprio D."/>
            <person name="Gale L.R."/>
            <person name="Gnerre S."/>
            <person name="Goswami R.S."/>
            <person name="Hammond-Kosack K."/>
            <person name="Harris L.J."/>
            <person name="Hilburn K."/>
            <person name="Kennell J.C."/>
            <person name="Kroken S."/>
            <person name="Magnuson J.K."/>
            <person name="Mannhaupt G."/>
            <person name="Mauceli E.W."/>
            <person name="Mewes H.-W."/>
            <person name="Mitterbauer R."/>
            <person name="Muehlbauer G."/>
            <person name="Muensterkoetter M."/>
            <person name="Nelson D."/>
            <person name="O'Donnell K."/>
            <person name="Ouellet T."/>
            <person name="Qi W."/>
            <person name="Quesneville H."/>
            <person name="Roncero M.I.G."/>
            <person name="Seong K.-Y."/>
            <person name="Tetko I.V."/>
            <person name="Urban M."/>
            <person name="Waalwijk C."/>
            <person name="Ward T.J."/>
            <person name="Yao J."/>
            <person name="Birren B.W."/>
            <person name="Kistler H.C."/>
        </authorList>
    </citation>
    <scope>NUCLEOTIDE SEQUENCE [LARGE SCALE GENOMIC DNA]</scope>
    <source>
        <strain>ATCC MYA-4620 / CBS 123657 / FGSC 9075 / NRRL 31084 / PH-1</strain>
    </source>
</reference>
<reference key="2">
    <citation type="journal article" date="2010" name="Nature">
        <title>Comparative genomics reveals mobile pathogenicity chromosomes in Fusarium.</title>
        <authorList>
            <person name="Ma L.-J."/>
            <person name="van der Does H.C."/>
            <person name="Borkovich K.A."/>
            <person name="Coleman J.J."/>
            <person name="Daboussi M.-J."/>
            <person name="Di Pietro A."/>
            <person name="Dufresne M."/>
            <person name="Freitag M."/>
            <person name="Grabherr M."/>
            <person name="Henrissat B."/>
            <person name="Houterman P.M."/>
            <person name="Kang S."/>
            <person name="Shim W.-B."/>
            <person name="Woloshuk C."/>
            <person name="Xie X."/>
            <person name="Xu J.-R."/>
            <person name="Antoniw J."/>
            <person name="Baker S.E."/>
            <person name="Bluhm B.H."/>
            <person name="Breakspear A."/>
            <person name="Brown D.W."/>
            <person name="Butchko R.A.E."/>
            <person name="Chapman S."/>
            <person name="Coulson R."/>
            <person name="Coutinho P.M."/>
            <person name="Danchin E.G.J."/>
            <person name="Diener A."/>
            <person name="Gale L.R."/>
            <person name="Gardiner D.M."/>
            <person name="Goff S."/>
            <person name="Hammond-Kosack K.E."/>
            <person name="Hilburn K."/>
            <person name="Hua-Van A."/>
            <person name="Jonkers W."/>
            <person name="Kazan K."/>
            <person name="Kodira C.D."/>
            <person name="Koehrsen M."/>
            <person name="Kumar L."/>
            <person name="Lee Y.-H."/>
            <person name="Li L."/>
            <person name="Manners J.M."/>
            <person name="Miranda-Saavedra D."/>
            <person name="Mukherjee M."/>
            <person name="Park G."/>
            <person name="Park J."/>
            <person name="Park S.-Y."/>
            <person name="Proctor R.H."/>
            <person name="Regev A."/>
            <person name="Ruiz-Roldan M.C."/>
            <person name="Sain D."/>
            <person name="Sakthikumar S."/>
            <person name="Sykes S."/>
            <person name="Schwartz D.C."/>
            <person name="Turgeon B.G."/>
            <person name="Wapinski I."/>
            <person name="Yoder O."/>
            <person name="Young S."/>
            <person name="Zeng Q."/>
            <person name="Zhou S."/>
            <person name="Galagan J."/>
            <person name="Cuomo C.A."/>
            <person name="Kistler H.C."/>
            <person name="Rep M."/>
        </authorList>
    </citation>
    <scope>GENOME REANNOTATION</scope>
    <source>
        <strain>ATCC MYA-4620 / CBS 123657 / FGSC 9075 / NRRL 31084 / PH-1</strain>
    </source>
</reference>
<reference key="3">
    <citation type="journal article" date="2015" name="BMC Genomics">
        <title>The completed genome sequence of the pathogenic ascomycete fungus Fusarium graminearum.</title>
        <authorList>
            <person name="King R."/>
            <person name="Urban M."/>
            <person name="Hammond-Kosack M.C.U."/>
            <person name="Hassani-Pak K."/>
            <person name="Hammond-Kosack K.E."/>
        </authorList>
    </citation>
    <scope>NUCLEOTIDE SEQUENCE [LARGE SCALE GENOMIC DNA]</scope>
    <source>
        <strain>ATCC MYA-4620 / CBS 123657 / FGSC 9075 / NRRL 31084 / PH-1</strain>
    </source>
</reference>
<reference key="4">
    <citation type="journal article" date="2017" name="J. Nat. Prod.">
        <title>Chrysogine biosynthesis is mediated by a two-module nonribosomal peptide synthetase.</title>
        <authorList>
            <person name="Wollenberg R.D."/>
            <person name="Saei W."/>
            <person name="Westphal K.R."/>
            <person name="Klitgaard C.S."/>
            <person name="Nielsen K.L."/>
            <person name="Lysoee E."/>
            <person name="Gardiner D.M."/>
            <person name="Wimmer R."/>
            <person name="Sondergaard T.E."/>
            <person name="Soerensen J.L."/>
        </authorList>
    </citation>
    <scope>FUNCTION</scope>
    <scope>PATHWAY</scope>
</reference>
<gene>
    <name evidence="4" type="primary">chry4</name>
    <name type="ORF">FG11398</name>
    <name type="ORF">FGRAMPH1_01T21965</name>
</gene>
<protein>
    <recommendedName>
        <fullName evidence="4">Short-chain dehydrogenase chry4</fullName>
        <ecNumber evidence="6">1.1.1.-</ecNumber>
    </recommendedName>
    <alternativeName>
        <fullName evidence="4">Chrysogine biosynthesis cluster protein 4</fullName>
    </alternativeName>
</protein>
<evidence type="ECO:0000250" key="1">
    <source>
        <dbReference type="UniProtKB" id="L0E2Z4"/>
    </source>
</evidence>
<evidence type="ECO:0000250" key="2">
    <source>
        <dbReference type="UniProtKB" id="O93868"/>
    </source>
</evidence>
<evidence type="ECO:0000269" key="3">
    <source>
    </source>
</evidence>
<evidence type="ECO:0000303" key="4">
    <source>
    </source>
</evidence>
<evidence type="ECO:0000305" key="5"/>
<evidence type="ECO:0000305" key="6">
    <source>
    </source>
</evidence>
<sequence length="259" mass="28450">MARILITGSTDGFGFEAARQLIERKHQVYLHARNQERADEVKTKLPGAAGVLIADLTTVAETRKLADEANAIGTFDAVILNAGLLYGPFRKSDLGVPASVFVNLVSPYIFAALLNPPKRLIFIASVLHHEADTSLKDIFWLERGEKEWKDFPAYCDAKFHVVLLVNAIARRFKDTSVIAVHPGYVPTKLAGQDAPGKMEDGIETYVMLAEGDYDTSLTGVYFDPKKERAQPHALTADLDKQEAVVKACEELTGIKLPSP</sequence>
<name>CHRY4_GIBZE</name>
<proteinExistence type="inferred from homology"/>
<organism>
    <name type="scientific">Gibberella zeae (strain ATCC MYA-4620 / CBS 123657 / FGSC 9075 / NRRL 31084 / PH-1)</name>
    <name type="common">Wheat head blight fungus</name>
    <name type="synonym">Fusarium graminearum</name>
    <dbReference type="NCBI Taxonomy" id="229533"/>
    <lineage>
        <taxon>Eukaryota</taxon>
        <taxon>Fungi</taxon>
        <taxon>Dikarya</taxon>
        <taxon>Ascomycota</taxon>
        <taxon>Pezizomycotina</taxon>
        <taxon>Sordariomycetes</taxon>
        <taxon>Hypocreomycetidae</taxon>
        <taxon>Hypocreales</taxon>
        <taxon>Nectriaceae</taxon>
        <taxon>Fusarium</taxon>
    </lineage>
</organism>
<accession>I1S3L0</accession>
<keyword id="KW-0521">NADP</keyword>
<keyword id="KW-0560">Oxidoreductase</keyword>
<keyword id="KW-1185">Reference proteome</keyword>
<dbReference type="EC" id="1.1.1.-" evidence="6"/>
<dbReference type="EMBL" id="HG970334">
    <property type="protein sequence ID" value="CEF85999.1"/>
    <property type="molecule type" value="Genomic_DNA"/>
</dbReference>
<dbReference type="RefSeq" id="XP_011325835.1">
    <property type="nucleotide sequence ID" value="XM_011327533.1"/>
</dbReference>
<dbReference type="SMR" id="I1S3L0"/>
<dbReference type="STRING" id="229533.I1S3L0"/>
<dbReference type="KEGG" id="fgr:FGSG_11398"/>
<dbReference type="VEuPathDB" id="FungiDB:FGRAMPH1_01G21965"/>
<dbReference type="eggNOG" id="KOG1208">
    <property type="taxonomic scope" value="Eukaryota"/>
</dbReference>
<dbReference type="HOGENOM" id="CLU_010194_44_5_1"/>
<dbReference type="InParanoid" id="I1S3L0"/>
<dbReference type="OrthoDB" id="78155at110618"/>
<dbReference type="Proteomes" id="UP000070720">
    <property type="component" value="Chromosome 3"/>
</dbReference>
<dbReference type="GO" id="GO:0016491">
    <property type="term" value="F:oxidoreductase activity"/>
    <property type="evidence" value="ECO:0007669"/>
    <property type="project" value="UniProtKB-KW"/>
</dbReference>
<dbReference type="Gene3D" id="3.40.50.720">
    <property type="entry name" value="NAD(P)-binding Rossmann-like Domain"/>
    <property type="match status" value="1"/>
</dbReference>
<dbReference type="InterPro" id="IPR036291">
    <property type="entry name" value="NAD(P)-bd_dom_sf"/>
</dbReference>
<dbReference type="InterPro" id="IPR002347">
    <property type="entry name" value="SDR_fam"/>
</dbReference>
<dbReference type="PANTHER" id="PTHR24320:SF274">
    <property type="entry name" value="CHAIN DEHYDROGENASE, PUTATIVE (AFU_ORTHOLOGUE AFUA_4G00440)-RELATED"/>
    <property type="match status" value="1"/>
</dbReference>
<dbReference type="PANTHER" id="PTHR24320">
    <property type="entry name" value="RETINOL DEHYDROGENASE"/>
    <property type="match status" value="1"/>
</dbReference>
<dbReference type="Pfam" id="PF00106">
    <property type="entry name" value="adh_short"/>
    <property type="match status" value="1"/>
</dbReference>
<dbReference type="PRINTS" id="PR00081">
    <property type="entry name" value="GDHRDH"/>
</dbReference>
<dbReference type="SUPFAM" id="SSF51735">
    <property type="entry name" value="NAD(P)-binding Rossmann-fold domains"/>
    <property type="match status" value="1"/>
</dbReference>
<comment type="function">
    <text evidence="3 6">Short-chain dehydrogenase; part of the gene cluster that mediates the biosynthesis of the yellow pigment chrysogine (PubMed:28708398). Pyruvic acid and anthranilic acid are likely substrates for the nonribosomal peptide synthetase chry1/NRPS14, with pyruvic acid adenylated by the first A domain and anthranilic acid by the second (Probable). If pyruvic acid and anthranilic acid are merged and released from chry1/NRPS14 by hydrolysis, a subsequent amidation would lead to 2-pyruvoylaminobenzamide (Probable). This process is probably catalyzed by the amidotransferase chry2 using glutamine as amino donor (Probable). The dehydrogenase chry5 that has a terminal berberine bridge domain for C-N cyclization could catalyze the cyclization of 2-pyruvoylaminobenzamide to yield acetyl-4(3H)-quinazolidinone (Probable). A final reduction of acetyl-4(3H)-quinazolidinone catalyzed by the oxidoreductase chry4 would result in chrysogine (Probable).</text>
</comment>
<comment type="pathway">
    <text evidence="6">Pigment biosynthesis.</text>
</comment>
<comment type="similarity">
    <text evidence="5">Belongs to the short-chain dehydrogenases/reductases (SDR) family.</text>
</comment>
<feature type="chain" id="PRO_0000450175" description="Short-chain dehydrogenase chry4">
    <location>
        <begin position="1"/>
        <end position="259"/>
    </location>
</feature>
<feature type="active site" description="Proton donor" evidence="2">
    <location>
        <position position="154"/>
    </location>
</feature>
<feature type="active site" description="Lowers pKa of active site Tyr" evidence="2">
    <location>
        <position position="158"/>
    </location>
</feature>
<feature type="binding site" evidence="1">
    <location>
        <position position="37"/>
    </location>
    <ligand>
        <name>NADP(+)</name>
        <dbReference type="ChEBI" id="CHEBI:58349"/>
    </ligand>
</feature>
<feature type="binding site" evidence="1">
    <location>
        <position position="55"/>
    </location>
    <ligand>
        <name>NADP(+)</name>
        <dbReference type="ChEBI" id="CHEBI:58349"/>
    </ligand>
</feature>
<feature type="binding site" evidence="2">
    <location>
        <position position="81"/>
    </location>
    <ligand>
        <name>NADP(+)</name>
        <dbReference type="ChEBI" id="CHEBI:58349"/>
    </ligand>
</feature>
<feature type="binding site" evidence="2">
    <location>
        <position position="154"/>
    </location>
    <ligand>
        <name>NADP(+)</name>
        <dbReference type="ChEBI" id="CHEBI:58349"/>
    </ligand>
</feature>
<feature type="binding site" evidence="2">
    <location>
        <position position="158"/>
    </location>
    <ligand>
        <name>NADP(+)</name>
        <dbReference type="ChEBI" id="CHEBI:58349"/>
    </ligand>
</feature>
<feature type="binding site" evidence="2">
    <location>
        <position position="185"/>
    </location>
    <ligand>
        <name>NADP(+)</name>
        <dbReference type="ChEBI" id="CHEBI:58349"/>
    </ligand>
</feature>
<feature type="binding site" evidence="1">
    <location>
        <position position="187"/>
    </location>
    <ligand>
        <name>NADP(+)</name>
        <dbReference type="ChEBI" id="CHEBI:58349"/>
    </ligand>
</feature>